<sequence>MADRTVFDPPPRQSTSSPSNNNPASIAHRSSFAENLRQSPRAHRHPSFTQAAVQELLNHPPAQKGGDPKFAGRDWRQIHVGELVQESDIHWCELDTDVEHATKALIESGPPNVILIRETPNDLTACDSFDYNDLNAYLLVVLGLASPDEAQTDTYSQLASKAREHAPIPLRDVITLAKKEPLTTLSQSEDLSKAVEIFGSGVHRILVCKPGTTTVVGILSQLKLVKFLWDNGSSFPAIDQLYPTILRDLNIGTQHAIAINGDKLLTDALQLMSNEGLTSIAVVDNAANVVGNISTADTKLLTHTSSLPLLQSSCIHFISVILSERGIGDGKDSFPVFHVNPYSTLAHTVAKLVATRSHRMWVVESASPSPSAPATPSLAHASVVQQPSGSGSVPPSPSFPAVSAAALPGARISGRLTGVITLSDILNLFARTSGLNPLNPNESRARRRRSSSASLRPSMDSSRGDYLDTIRGERGSSVDNRK</sequence>
<accession>A7FA72</accession>
<accession>A0A384JA43</accession>
<feature type="chain" id="PRO_0000324948" description="Protein sds23">
    <location>
        <begin position="1"/>
        <end position="482"/>
    </location>
</feature>
<feature type="domain" description="CBS 1" evidence="2">
    <location>
        <begin position="83"/>
        <end position="239"/>
    </location>
</feature>
<feature type="domain" description="CBS 2" evidence="2">
    <location>
        <begin position="177"/>
        <end position="234"/>
    </location>
</feature>
<feature type="domain" description="CBS 3" evidence="2">
    <location>
        <begin position="252"/>
        <end position="309"/>
    </location>
</feature>
<feature type="domain" description="CBS 4" evidence="2">
    <location>
        <begin position="363"/>
        <end position="438"/>
    </location>
</feature>
<feature type="region of interest" description="Disordered" evidence="3">
    <location>
        <begin position="1"/>
        <end position="46"/>
    </location>
</feature>
<feature type="region of interest" description="Disordered" evidence="3">
    <location>
        <begin position="366"/>
        <end position="398"/>
    </location>
</feature>
<feature type="region of interest" description="Disordered" evidence="3">
    <location>
        <begin position="433"/>
        <end position="482"/>
    </location>
</feature>
<feature type="compositionally biased region" description="Low complexity" evidence="3">
    <location>
        <begin position="13"/>
        <end position="25"/>
    </location>
</feature>
<feature type="compositionally biased region" description="Polar residues" evidence="3">
    <location>
        <begin position="433"/>
        <end position="442"/>
    </location>
</feature>
<feature type="compositionally biased region" description="Low complexity" evidence="3">
    <location>
        <begin position="451"/>
        <end position="461"/>
    </location>
</feature>
<feature type="compositionally biased region" description="Basic and acidic residues" evidence="3">
    <location>
        <begin position="462"/>
        <end position="482"/>
    </location>
</feature>
<evidence type="ECO:0000250" key="1"/>
<evidence type="ECO:0000255" key="2">
    <source>
        <dbReference type="PROSITE-ProRule" id="PRU00703"/>
    </source>
</evidence>
<evidence type="ECO:0000256" key="3">
    <source>
        <dbReference type="SAM" id="MobiDB-lite"/>
    </source>
</evidence>
<evidence type="ECO:0000305" key="4"/>
<proteinExistence type="inferred from homology"/>
<organism>
    <name type="scientific">Botryotinia fuckeliana (strain B05.10)</name>
    <name type="common">Noble rot fungus</name>
    <name type="synonym">Botrytis cinerea</name>
    <dbReference type="NCBI Taxonomy" id="332648"/>
    <lineage>
        <taxon>Eukaryota</taxon>
        <taxon>Fungi</taxon>
        <taxon>Dikarya</taxon>
        <taxon>Ascomycota</taxon>
        <taxon>Pezizomycotina</taxon>
        <taxon>Leotiomycetes</taxon>
        <taxon>Helotiales</taxon>
        <taxon>Sclerotiniaceae</taxon>
        <taxon>Botrytis</taxon>
    </lineage>
</organism>
<protein>
    <recommendedName>
        <fullName>Protein sds23</fullName>
    </recommendedName>
</protein>
<dbReference type="EMBL" id="CP009806">
    <property type="protein sequence ID" value="ATZ47466.1"/>
    <property type="molecule type" value="Genomic_DNA"/>
</dbReference>
<dbReference type="RefSeq" id="XP_001547997.1">
    <property type="nucleotide sequence ID" value="XM_001547947.1"/>
</dbReference>
<dbReference type="SMR" id="A7FA72"/>
<dbReference type="EnsemblFungi" id="Bcin02g07420.1">
    <property type="protein sequence ID" value="Bcin02p07420.1"/>
    <property type="gene ID" value="Bcin02g07420"/>
</dbReference>
<dbReference type="GeneID" id="5428476"/>
<dbReference type="KEGG" id="bfu:BCIN_02g07420"/>
<dbReference type="VEuPathDB" id="FungiDB:Bcin02g07420"/>
<dbReference type="OrthoDB" id="449052at2759"/>
<dbReference type="Proteomes" id="UP000001798">
    <property type="component" value="Chromosome bcin02"/>
</dbReference>
<dbReference type="GO" id="GO:0005737">
    <property type="term" value="C:cytoplasm"/>
    <property type="evidence" value="ECO:0007669"/>
    <property type="project" value="UniProtKB-SubCell"/>
</dbReference>
<dbReference type="GO" id="GO:0005634">
    <property type="term" value="C:nucleus"/>
    <property type="evidence" value="ECO:0007669"/>
    <property type="project" value="UniProtKB-SubCell"/>
</dbReference>
<dbReference type="GO" id="GO:0004865">
    <property type="term" value="F:protein serine/threonine phosphatase inhibitor activity"/>
    <property type="evidence" value="ECO:0007669"/>
    <property type="project" value="TreeGrafter"/>
</dbReference>
<dbReference type="GO" id="GO:0042149">
    <property type="term" value="P:cellular response to glucose starvation"/>
    <property type="evidence" value="ECO:0007669"/>
    <property type="project" value="InterPro"/>
</dbReference>
<dbReference type="GO" id="GO:0030071">
    <property type="term" value="P:regulation of mitotic metaphase/anaphase transition"/>
    <property type="evidence" value="ECO:0007669"/>
    <property type="project" value="InterPro"/>
</dbReference>
<dbReference type="CDD" id="cd02205">
    <property type="entry name" value="CBS_pair_SF"/>
    <property type="match status" value="1"/>
</dbReference>
<dbReference type="Gene3D" id="3.10.580.10">
    <property type="entry name" value="CBS-domain"/>
    <property type="match status" value="2"/>
</dbReference>
<dbReference type="InterPro" id="IPR050511">
    <property type="entry name" value="AMPK_gamma/SDS23_families"/>
</dbReference>
<dbReference type="InterPro" id="IPR000644">
    <property type="entry name" value="CBS_dom"/>
</dbReference>
<dbReference type="InterPro" id="IPR046342">
    <property type="entry name" value="CBS_dom_sf"/>
</dbReference>
<dbReference type="InterPro" id="IPR016711">
    <property type="entry name" value="Ssd23"/>
</dbReference>
<dbReference type="PANTHER" id="PTHR13780">
    <property type="entry name" value="AMP-ACTIVATED PROTEIN KINASE, GAMMA REGULATORY SUBUNIT"/>
    <property type="match status" value="1"/>
</dbReference>
<dbReference type="PANTHER" id="PTHR13780:SF36">
    <property type="entry name" value="CBS DOMAIN-CONTAINING PROTEIN"/>
    <property type="match status" value="1"/>
</dbReference>
<dbReference type="Pfam" id="PF00571">
    <property type="entry name" value="CBS"/>
    <property type="match status" value="2"/>
</dbReference>
<dbReference type="PIRSF" id="PIRSF018148">
    <property type="entry name" value="UCP018148_CBS_YBR214w"/>
    <property type="match status" value="1"/>
</dbReference>
<dbReference type="SMART" id="SM00116">
    <property type="entry name" value="CBS"/>
    <property type="match status" value="3"/>
</dbReference>
<dbReference type="SUPFAM" id="SSF54631">
    <property type="entry name" value="CBS-domain pair"/>
    <property type="match status" value="2"/>
</dbReference>
<dbReference type="PROSITE" id="PS51371">
    <property type="entry name" value="CBS"/>
    <property type="match status" value="3"/>
</dbReference>
<name>SDS23_BOTFB</name>
<keyword id="KW-0129">CBS domain</keyword>
<keyword id="KW-0963">Cytoplasm</keyword>
<keyword id="KW-0539">Nucleus</keyword>
<keyword id="KW-1185">Reference proteome</keyword>
<keyword id="KW-0677">Repeat</keyword>
<reference key="1">
    <citation type="journal article" date="2011" name="PLoS Genet.">
        <title>Genomic analysis of the necrotrophic fungal pathogens Sclerotinia sclerotiorum and Botrytis cinerea.</title>
        <authorList>
            <person name="Amselem J."/>
            <person name="Cuomo C.A."/>
            <person name="van Kan J.A.L."/>
            <person name="Viaud M."/>
            <person name="Benito E.P."/>
            <person name="Couloux A."/>
            <person name="Coutinho P.M."/>
            <person name="de Vries R.P."/>
            <person name="Dyer P.S."/>
            <person name="Fillinger S."/>
            <person name="Fournier E."/>
            <person name="Gout L."/>
            <person name="Hahn M."/>
            <person name="Kohn L."/>
            <person name="Lapalu N."/>
            <person name="Plummer K.M."/>
            <person name="Pradier J.-M."/>
            <person name="Quevillon E."/>
            <person name="Sharon A."/>
            <person name="Simon A."/>
            <person name="ten Have A."/>
            <person name="Tudzynski B."/>
            <person name="Tudzynski P."/>
            <person name="Wincker P."/>
            <person name="Andrew M."/>
            <person name="Anthouard V."/>
            <person name="Beever R.E."/>
            <person name="Beffa R."/>
            <person name="Benoit I."/>
            <person name="Bouzid O."/>
            <person name="Brault B."/>
            <person name="Chen Z."/>
            <person name="Choquer M."/>
            <person name="Collemare J."/>
            <person name="Cotton P."/>
            <person name="Danchin E.G."/>
            <person name="Da Silva C."/>
            <person name="Gautier A."/>
            <person name="Giraud C."/>
            <person name="Giraud T."/>
            <person name="Gonzalez C."/>
            <person name="Grossetete S."/>
            <person name="Gueldener U."/>
            <person name="Henrissat B."/>
            <person name="Howlett B.J."/>
            <person name="Kodira C."/>
            <person name="Kretschmer M."/>
            <person name="Lappartient A."/>
            <person name="Leroch M."/>
            <person name="Levis C."/>
            <person name="Mauceli E."/>
            <person name="Neuveglise C."/>
            <person name="Oeser B."/>
            <person name="Pearson M."/>
            <person name="Poulain J."/>
            <person name="Poussereau N."/>
            <person name="Quesneville H."/>
            <person name="Rascle C."/>
            <person name="Schumacher J."/>
            <person name="Segurens B."/>
            <person name="Sexton A."/>
            <person name="Silva E."/>
            <person name="Sirven C."/>
            <person name="Soanes D.M."/>
            <person name="Talbot N.J."/>
            <person name="Templeton M."/>
            <person name="Yandava C."/>
            <person name="Yarden O."/>
            <person name="Zeng Q."/>
            <person name="Rollins J.A."/>
            <person name="Lebrun M.-H."/>
            <person name="Dickman M."/>
        </authorList>
    </citation>
    <scope>NUCLEOTIDE SEQUENCE [LARGE SCALE GENOMIC DNA]</scope>
    <source>
        <strain>B05.10</strain>
    </source>
</reference>
<reference key="2">
    <citation type="journal article" date="2012" name="Eukaryot. Cell">
        <title>Genome update of Botrytis cinerea strains B05.10 and T4.</title>
        <authorList>
            <person name="Staats M."/>
            <person name="van Kan J.A.L."/>
        </authorList>
    </citation>
    <scope>NUCLEOTIDE SEQUENCE [LARGE SCALE GENOMIC DNA]</scope>
    <scope>GENOME REANNOTATION</scope>
    <source>
        <strain>B05.10</strain>
    </source>
</reference>
<reference key="3">
    <citation type="journal article" date="2017" name="Mol. Plant Pathol.">
        <title>A gapless genome sequence of the fungus Botrytis cinerea.</title>
        <authorList>
            <person name="van Kan J.A.L."/>
            <person name="Stassen J.H.M."/>
            <person name="Mosbach A."/>
            <person name="van der Lee T.A.J."/>
            <person name="Faino L."/>
            <person name="Farmer A.D."/>
            <person name="Papasotiriou D.G."/>
            <person name="Zhou S."/>
            <person name="Seidl M.F."/>
            <person name="Cottam E."/>
            <person name="Edel D."/>
            <person name="Hahn M."/>
            <person name="Schwartz D.C."/>
            <person name="Dietrich R.A."/>
            <person name="Widdison S."/>
            <person name="Scalliet G."/>
        </authorList>
    </citation>
    <scope>NUCLEOTIDE SEQUENCE [LARGE SCALE GENOMIC DNA]</scope>
    <scope>GENOME REANNOTATION</scope>
    <source>
        <strain>B05.10</strain>
    </source>
</reference>
<comment type="function">
    <text evidence="1">Involved in DNA replication and cell separation.</text>
</comment>
<comment type="subcellular location">
    <subcellularLocation>
        <location evidence="1">Cytoplasm</location>
    </subcellularLocation>
    <subcellularLocation>
        <location evidence="1">Nucleus</location>
    </subcellularLocation>
</comment>
<comment type="similarity">
    <text evidence="4">Belongs to the SDS23 family.</text>
</comment>
<gene>
    <name type="primary">sds23</name>
    <name type="ORF">BC1G_13503</name>
    <name type="ORF">BCIN_02g07420</name>
</gene>